<sequence length="359" mass="39715">MSTENTLSVADLARENVRNLVPYQSARRLGGNGDVWLNANEFPTAVEFQLTQQTLNRYPECQPKAVIENYAQYAGVKPEQVLVSRGADEGIELVIRAFCEPGKDAILYCPPTYGMYSVSAETIGVERRTVPALENWQLDLQGISDNLDGTKVVFVCSPNNPTGQLINPQDLRTLLELTRGKAIVVADEAYIEFCPQATLTGWLVEYPHLVILRTLSKAFALAGLRCGFTLANEEVINLLLKVIAPYPLSTPVADIAAQALCPQGINAMRDRVAQTVQERQYLVNALKQTACVEHVFDSETNYILARFTASSSVFKSLWDQGIILRDQNKQPSLSGCLRITVGTRQENQRVIDALRAEPV</sequence>
<proteinExistence type="inferred from homology"/>
<keyword id="KW-0028">Amino-acid biosynthesis</keyword>
<keyword id="KW-0032">Aminotransferase</keyword>
<keyword id="KW-0368">Histidine biosynthesis</keyword>
<keyword id="KW-0663">Pyridoxal phosphate</keyword>
<keyword id="KW-0808">Transferase</keyword>
<organism>
    <name type="scientific">Salmonella heidelberg (strain SL476)</name>
    <dbReference type="NCBI Taxonomy" id="454169"/>
    <lineage>
        <taxon>Bacteria</taxon>
        <taxon>Pseudomonadati</taxon>
        <taxon>Pseudomonadota</taxon>
        <taxon>Gammaproteobacteria</taxon>
        <taxon>Enterobacterales</taxon>
        <taxon>Enterobacteriaceae</taxon>
        <taxon>Salmonella</taxon>
    </lineage>
</organism>
<accession>B4T9N5</accession>
<comment type="catalytic activity">
    <reaction evidence="1">
        <text>L-histidinol phosphate + 2-oxoglutarate = 3-(imidazol-4-yl)-2-oxopropyl phosphate + L-glutamate</text>
        <dbReference type="Rhea" id="RHEA:23744"/>
        <dbReference type="ChEBI" id="CHEBI:16810"/>
        <dbReference type="ChEBI" id="CHEBI:29985"/>
        <dbReference type="ChEBI" id="CHEBI:57766"/>
        <dbReference type="ChEBI" id="CHEBI:57980"/>
        <dbReference type="EC" id="2.6.1.9"/>
    </reaction>
</comment>
<comment type="cofactor">
    <cofactor evidence="1">
        <name>pyridoxal 5'-phosphate</name>
        <dbReference type="ChEBI" id="CHEBI:597326"/>
    </cofactor>
</comment>
<comment type="pathway">
    <text evidence="1">Amino-acid biosynthesis; L-histidine biosynthesis; L-histidine from 5-phospho-alpha-D-ribose 1-diphosphate: step 7/9.</text>
</comment>
<comment type="subunit">
    <text evidence="1">Homodimer.</text>
</comment>
<comment type="similarity">
    <text evidence="1">Belongs to the class-II pyridoxal-phosphate-dependent aminotransferase family. Histidinol-phosphate aminotransferase subfamily.</text>
</comment>
<reference key="1">
    <citation type="journal article" date="2011" name="J. Bacteriol.">
        <title>Comparative genomics of 28 Salmonella enterica isolates: evidence for CRISPR-mediated adaptive sublineage evolution.</title>
        <authorList>
            <person name="Fricke W.F."/>
            <person name="Mammel M.K."/>
            <person name="McDermott P.F."/>
            <person name="Tartera C."/>
            <person name="White D.G."/>
            <person name="Leclerc J.E."/>
            <person name="Ravel J."/>
            <person name="Cebula T.A."/>
        </authorList>
    </citation>
    <scope>NUCLEOTIDE SEQUENCE [LARGE SCALE GENOMIC DNA]</scope>
    <source>
        <strain>SL476</strain>
    </source>
</reference>
<evidence type="ECO:0000255" key="1">
    <source>
        <dbReference type="HAMAP-Rule" id="MF_01023"/>
    </source>
</evidence>
<dbReference type="EC" id="2.6.1.9" evidence="1"/>
<dbReference type="EMBL" id="CP001120">
    <property type="protein sequence ID" value="ACF69942.1"/>
    <property type="molecule type" value="Genomic_DNA"/>
</dbReference>
<dbReference type="RefSeq" id="WP_000102712.1">
    <property type="nucleotide sequence ID" value="NC_011083.1"/>
</dbReference>
<dbReference type="SMR" id="B4T9N5"/>
<dbReference type="KEGG" id="seh:SeHA_C2299"/>
<dbReference type="HOGENOM" id="CLU_017584_3_1_6"/>
<dbReference type="UniPathway" id="UPA00031">
    <property type="reaction ID" value="UER00012"/>
</dbReference>
<dbReference type="Proteomes" id="UP000001866">
    <property type="component" value="Chromosome"/>
</dbReference>
<dbReference type="GO" id="GO:0004400">
    <property type="term" value="F:histidinol-phosphate transaminase activity"/>
    <property type="evidence" value="ECO:0007669"/>
    <property type="project" value="UniProtKB-UniRule"/>
</dbReference>
<dbReference type="GO" id="GO:0030170">
    <property type="term" value="F:pyridoxal phosphate binding"/>
    <property type="evidence" value="ECO:0007669"/>
    <property type="project" value="InterPro"/>
</dbReference>
<dbReference type="GO" id="GO:0000105">
    <property type="term" value="P:L-histidine biosynthetic process"/>
    <property type="evidence" value="ECO:0007669"/>
    <property type="project" value="UniProtKB-UniRule"/>
</dbReference>
<dbReference type="CDD" id="cd00609">
    <property type="entry name" value="AAT_like"/>
    <property type="match status" value="1"/>
</dbReference>
<dbReference type="FunFam" id="3.40.640.10:FF:000032">
    <property type="entry name" value="Histidinol-phosphate aminotransferase"/>
    <property type="match status" value="1"/>
</dbReference>
<dbReference type="Gene3D" id="3.90.1150.10">
    <property type="entry name" value="Aspartate Aminotransferase, domain 1"/>
    <property type="match status" value="1"/>
</dbReference>
<dbReference type="Gene3D" id="3.40.640.10">
    <property type="entry name" value="Type I PLP-dependent aspartate aminotransferase-like (Major domain)"/>
    <property type="match status" value="1"/>
</dbReference>
<dbReference type="HAMAP" id="MF_01023">
    <property type="entry name" value="HisC_aminotrans_2"/>
    <property type="match status" value="1"/>
</dbReference>
<dbReference type="InterPro" id="IPR001917">
    <property type="entry name" value="Aminotrans_II_pyridoxalP_BS"/>
</dbReference>
<dbReference type="InterPro" id="IPR004839">
    <property type="entry name" value="Aminotransferase_I/II_large"/>
</dbReference>
<dbReference type="InterPro" id="IPR005861">
    <property type="entry name" value="HisP_aminotrans"/>
</dbReference>
<dbReference type="InterPro" id="IPR015424">
    <property type="entry name" value="PyrdxlP-dep_Trfase"/>
</dbReference>
<dbReference type="InterPro" id="IPR015421">
    <property type="entry name" value="PyrdxlP-dep_Trfase_major"/>
</dbReference>
<dbReference type="InterPro" id="IPR015422">
    <property type="entry name" value="PyrdxlP-dep_Trfase_small"/>
</dbReference>
<dbReference type="NCBIfam" id="TIGR01141">
    <property type="entry name" value="hisC"/>
    <property type="match status" value="1"/>
</dbReference>
<dbReference type="PANTHER" id="PTHR42885:SF2">
    <property type="entry name" value="HISTIDINOL-PHOSPHATE AMINOTRANSFERASE"/>
    <property type="match status" value="1"/>
</dbReference>
<dbReference type="PANTHER" id="PTHR42885">
    <property type="entry name" value="HISTIDINOL-PHOSPHATE AMINOTRANSFERASE-RELATED"/>
    <property type="match status" value="1"/>
</dbReference>
<dbReference type="Pfam" id="PF00155">
    <property type="entry name" value="Aminotran_1_2"/>
    <property type="match status" value="1"/>
</dbReference>
<dbReference type="SUPFAM" id="SSF53383">
    <property type="entry name" value="PLP-dependent transferases"/>
    <property type="match status" value="1"/>
</dbReference>
<dbReference type="PROSITE" id="PS00599">
    <property type="entry name" value="AA_TRANSFER_CLASS_2"/>
    <property type="match status" value="1"/>
</dbReference>
<name>HIS8_SALHS</name>
<gene>
    <name evidence="1" type="primary">hisC</name>
    <name type="ordered locus">SeHA_C2299</name>
</gene>
<feature type="chain" id="PRO_1000135420" description="Histidinol-phosphate aminotransferase">
    <location>
        <begin position="1"/>
        <end position="359"/>
    </location>
</feature>
<feature type="modified residue" description="N6-(pyridoxal phosphate)lysine" evidence="1">
    <location>
        <position position="217"/>
    </location>
</feature>
<protein>
    <recommendedName>
        <fullName evidence="1">Histidinol-phosphate aminotransferase</fullName>
        <ecNumber evidence="1">2.6.1.9</ecNumber>
    </recommendedName>
    <alternativeName>
        <fullName evidence="1">Imidazole acetol-phosphate transaminase</fullName>
    </alternativeName>
</protein>